<comment type="function">
    <text evidence="1">Guanine nucleotide exchange factor for the small GTPase RALA. May be involved in cytoskeletal organization. May also be involved in the stimulation of transcription in a Ras-independent fashion (By similarity).</text>
</comment>
<comment type="subunit">
    <text evidence="1">Interacts with the SH3 domains of GRB2 and PLCG1. Interacts with RALA.</text>
</comment>
<comment type="interaction">
    <interactant intactId="EBI-1050841">
        <id>Q86X27</id>
    </interactant>
    <interactant intactId="EBI-1051317">
        <id>Q9H4L5</id>
        <label>OSBPL3</label>
    </interactant>
    <organismsDiffer>false</organismsDiffer>
    <experiments>3</experiments>
</comment>
<comment type="interaction">
    <interactant intactId="EBI-1050841">
        <id>Q86X27</id>
    </interactant>
    <interactant intactId="EBI-476295">
        <id>P31947</id>
        <label>SFN</label>
    </interactant>
    <organismsDiffer>false</organismsDiffer>
    <experiments>2</experiments>
</comment>
<comment type="interaction">
    <interactant intactId="EBI-1050841">
        <id>Q86X27</id>
    </interactant>
    <interactant intactId="EBI-356498">
        <id>P62258</id>
        <label>YWHAE</label>
    </interactant>
    <organismsDiffer>false</organismsDiffer>
    <experiments>3</experiments>
</comment>
<comment type="subcellular location">
    <subcellularLocation>
        <location evidence="1">Cytoplasm</location>
    </subcellularLocation>
    <subcellularLocation>
        <location evidence="1">Cell membrane</location>
    </subcellularLocation>
    <text evidence="1">Associates with membranes through the PH domain.</text>
</comment>
<comment type="alternative products">
    <event type="alternative splicing"/>
    <isoform>
        <id>Q86X27-1</id>
        <name>1</name>
        <sequence type="displayed"/>
    </isoform>
    <isoform>
        <id>Q86X27-2</id>
        <name>2</name>
        <sequence type="described" ref="VSP_031971"/>
    </isoform>
    <isoform>
        <id>Q86X27-3</id>
        <name>3</name>
        <sequence type="described" ref="VSP_054909"/>
    </isoform>
</comment>
<comment type="domain">
    <text evidence="1">The PH domain mediates binding to phosphatidylinositol 4,5-bisphosphate.</text>
</comment>
<comment type="disease">
    <text evidence="6">RALGPS2 is a potential candidate gene for susceptibility to Alzheimer disease linked to 1q24.</text>
</comment>
<proteinExistence type="evidence at protein level"/>
<reference key="1">
    <citation type="journal article" date="2004" name="Nat. Genet.">
        <title>Complete sequencing and characterization of 21,243 full-length human cDNAs.</title>
        <authorList>
            <person name="Ota T."/>
            <person name="Suzuki Y."/>
            <person name="Nishikawa T."/>
            <person name="Otsuki T."/>
            <person name="Sugiyama T."/>
            <person name="Irie R."/>
            <person name="Wakamatsu A."/>
            <person name="Hayashi K."/>
            <person name="Sato H."/>
            <person name="Nagai K."/>
            <person name="Kimura K."/>
            <person name="Makita H."/>
            <person name="Sekine M."/>
            <person name="Obayashi M."/>
            <person name="Nishi T."/>
            <person name="Shibahara T."/>
            <person name="Tanaka T."/>
            <person name="Ishii S."/>
            <person name="Yamamoto J."/>
            <person name="Saito K."/>
            <person name="Kawai Y."/>
            <person name="Isono Y."/>
            <person name="Nakamura Y."/>
            <person name="Nagahari K."/>
            <person name="Murakami K."/>
            <person name="Yasuda T."/>
            <person name="Iwayanagi T."/>
            <person name="Wagatsuma M."/>
            <person name="Shiratori A."/>
            <person name="Sudo H."/>
            <person name="Hosoiri T."/>
            <person name="Kaku Y."/>
            <person name="Kodaira H."/>
            <person name="Kondo H."/>
            <person name="Sugawara M."/>
            <person name="Takahashi M."/>
            <person name="Kanda K."/>
            <person name="Yokoi T."/>
            <person name="Furuya T."/>
            <person name="Kikkawa E."/>
            <person name="Omura Y."/>
            <person name="Abe K."/>
            <person name="Kamihara K."/>
            <person name="Katsuta N."/>
            <person name="Sato K."/>
            <person name="Tanikawa M."/>
            <person name="Yamazaki M."/>
            <person name="Ninomiya K."/>
            <person name="Ishibashi T."/>
            <person name="Yamashita H."/>
            <person name="Murakawa K."/>
            <person name="Fujimori K."/>
            <person name="Tanai H."/>
            <person name="Kimata M."/>
            <person name="Watanabe M."/>
            <person name="Hiraoka S."/>
            <person name="Chiba Y."/>
            <person name="Ishida S."/>
            <person name="Ono Y."/>
            <person name="Takiguchi S."/>
            <person name="Watanabe S."/>
            <person name="Yosida M."/>
            <person name="Hotuta T."/>
            <person name="Kusano J."/>
            <person name="Kanehori K."/>
            <person name="Takahashi-Fujii A."/>
            <person name="Hara H."/>
            <person name="Tanase T.-O."/>
            <person name="Nomura Y."/>
            <person name="Togiya S."/>
            <person name="Komai F."/>
            <person name="Hara R."/>
            <person name="Takeuchi K."/>
            <person name="Arita M."/>
            <person name="Imose N."/>
            <person name="Musashino K."/>
            <person name="Yuuki H."/>
            <person name="Oshima A."/>
            <person name="Sasaki N."/>
            <person name="Aotsuka S."/>
            <person name="Yoshikawa Y."/>
            <person name="Matsunawa H."/>
            <person name="Ichihara T."/>
            <person name="Shiohata N."/>
            <person name="Sano S."/>
            <person name="Moriya S."/>
            <person name="Momiyama H."/>
            <person name="Satoh N."/>
            <person name="Takami S."/>
            <person name="Terashima Y."/>
            <person name="Suzuki O."/>
            <person name="Nakagawa S."/>
            <person name="Senoh A."/>
            <person name="Mizoguchi H."/>
            <person name="Goto Y."/>
            <person name="Shimizu F."/>
            <person name="Wakebe H."/>
            <person name="Hishigaki H."/>
            <person name="Watanabe T."/>
            <person name="Sugiyama A."/>
            <person name="Takemoto M."/>
            <person name="Kawakami B."/>
            <person name="Yamazaki M."/>
            <person name="Watanabe K."/>
            <person name="Kumagai A."/>
            <person name="Itakura S."/>
            <person name="Fukuzumi Y."/>
            <person name="Fujimori Y."/>
            <person name="Komiyama M."/>
            <person name="Tashiro H."/>
            <person name="Tanigami A."/>
            <person name="Fujiwara T."/>
            <person name="Ono T."/>
            <person name="Yamada K."/>
            <person name="Fujii Y."/>
            <person name="Ozaki K."/>
            <person name="Hirao M."/>
            <person name="Ohmori Y."/>
            <person name="Kawabata A."/>
            <person name="Hikiji T."/>
            <person name="Kobatake N."/>
            <person name="Inagaki H."/>
            <person name="Ikema Y."/>
            <person name="Okamoto S."/>
            <person name="Okitani R."/>
            <person name="Kawakami T."/>
            <person name="Noguchi S."/>
            <person name="Itoh T."/>
            <person name="Shigeta K."/>
            <person name="Senba T."/>
            <person name="Matsumura K."/>
            <person name="Nakajima Y."/>
            <person name="Mizuno T."/>
            <person name="Morinaga M."/>
            <person name="Sasaki M."/>
            <person name="Togashi T."/>
            <person name="Oyama M."/>
            <person name="Hata H."/>
            <person name="Watanabe M."/>
            <person name="Komatsu T."/>
            <person name="Mizushima-Sugano J."/>
            <person name="Satoh T."/>
            <person name="Shirai Y."/>
            <person name="Takahashi Y."/>
            <person name="Nakagawa K."/>
            <person name="Okumura K."/>
            <person name="Nagase T."/>
            <person name="Nomura N."/>
            <person name="Kikuchi H."/>
            <person name="Masuho Y."/>
            <person name="Yamashita R."/>
            <person name="Nakai K."/>
            <person name="Yada T."/>
            <person name="Nakamura Y."/>
            <person name="Ohara O."/>
            <person name="Isogai T."/>
            <person name="Sugano S."/>
        </authorList>
    </citation>
    <scope>NUCLEOTIDE SEQUENCE [LARGE SCALE MRNA] (ISOFORMS 2 AND 3)</scope>
    <source>
        <tissue>Embryo</tissue>
        <tissue>Testis</tissue>
    </source>
</reference>
<reference key="2">
    <citation type="journal article" date="2006" name="Nature">
        <title>The DNA sequence and biological annotation of human chromosome 1.</title>
        <authorList>
            <person name="Gregory S.G."/>
            <person name="Barlow K.F."/>
            <person name="McLay K.E."/>
            <person name="Kaul R."/>
            <person name="Swarbreck D."/>
            <person name="Dunham A."/>
            <person name="Scott C.E."/>
            <person name="Howe K.L."/>
            <person name="Woodfine K."/>
            <person name="Spencer C.C.A."/>
            <person name="Jones M.C."/>
            <person name="Gillson C."/>
            <person name="Searle S."/>
            <person name="Zhou Y."/>
            <person name="Kokocinski F."/>
            <person name="McDonald L."/>
            <person name="Evans R."/>
            <person name="Phillips K."/>
            <person name="Atkinson A."/>
            <person name="Cooper R."/>
            <person name="Jones C."/>
            <person name="Hall R.E."/>
            <person name="Andrews T.D."/>
            <person name="Lloyd C."/>
            <person name="Ainscough R."/>
            <person name="Almeida J.P."/>
            <person name="Ambrose K.D."/>
            <person name="Anderson F."/>
            <person name="Andrew R.W."/>
            <person name="Ashwell R.I.S."/>
            <person name="Aubin K."/>
            <person name="Babbage A.K."/>
            <person name="Bagguley C.L."/>
            <person name="Bailey J."/>
            <person name="Beasley H."/>
            <person name="Bethel G."/>
            <person name="Bird C.P."/>
            <person name="Bray-Allen S."/>
            <person name="Brown J.Y."/>
            <person name="Brown A.J."/>
            <person name="Buckley D."/>
            <person name="Burton J."/>
            <person name="Bye J."/>
            <person name="Carder C."/>
            <person name="Chapman J.C."/>
            <person name="Clark S.Y."/>
            <person name="Clarke G."/>
            <person name="Clee C."/>
            <person name="Cobley V."/>
            <person name="Collier R.E."/>
            <person name="Corby N."/>
            <person name="Coville G.J."/>
            <person name="Davies J."/>
            <person name="Deadman R."/>
            <person name="Dunn M."/>
            <person name="Earthrowl M."/>
            <person name="Ellington A.G."/>
            <person name="Errington H."/>
            <person name="Frankish A."/>
            <person name="Frankland J."/>
            <person name="French L."/>
            <person name="Garner P."/>
            <person name="Garnett J."/>
            <person name="Gay L."/>
            <person name="Ghori M.R.J."/>
            <person name="Gibson R."/>
            <person name="Gilby L.M."/>
            <person name="Gillett W."/>
            <person name="Glithero R.J."/>
            <person name="Grafham D.V."/>
            <person name="Griffiths C."/>
            <person name="Griffiths-Jones S."/>
            <person name="Grocock R."/>
            <person name="Hammond S."/>
            <person name="Harrison E.S.I."/>
            <person name="Hart E."/>
            <person name="Haugen E."/>
            <person name="Heath P.D."/>
            <person name="Holmes S."/>
            <person name="Holt K."/>
            <person name="Howden P.J."/>
            <person name="Hunt A.R."/>
            <person name="Hunt S.E."/>
            <person name="Hunter G."/>
            <person name="Isherwood J."/>
            <person name="James R."/>
            <person name="Johnson C."/>
            <person name="Johnson D."/>
            <person name="Joy A."/>
            <person name="Kay M."/>
            <person name="Kershaw J.K."/>
            <person name="Kibukawa M."/>
            <person name="Kimberley A.M."/>
            <person name="King A."/>
            <person name="Knights A.J."/>
            <person name="Lad H."/>
            <person name="Laird G."/>
            <person name="Lawlor S."/>
            <person name="Leongamornlert D.A."/>
            <person name="Lloyd D.M."/>
            <person name="Loveland J."/>
            <person name="Lovell J."/>
            <person name="Lush M.J."/>
            <person name="Lyne R."/>
            <person name="Martin S."/>
            <person name="Mashreghi-Mohammadi M."/>
            <person name="Matthews L."/>
            <person name="Matthews N.S.W."/>
            <person name="McLaren S."/>
            <person name="Milne S."/>
            <person name="Mistry S."/>
            <person name="Moore M.J.F."/>
            <person name="Nickerson T."/>
            <person name="O'Dell C.N."/>
            <person name="Oliver K."/>
            <person name="Palmeiri A."/>
            <person name="Palmer S.A."/>
            <person name="Parker A."/>
            <person name="Patel D."/>
            <person name="Pearce A.V."/>
            <person name="Peck A.I."/>
            <person name="Pelan S."/>
            <person name="Phelps K."/>
            <person name="Phillimore B.J."/>
            <person name="Plumb R."/>
            <person name="Rajan J."/>
            <person name="Raymond C."/>
            <person name="Rouse G."/>
            <person name="Saenphimmachak C."/>
            <person name="Sehra H.K."/>
            <person name="Sheridan E."/>
            <person name="Shownkeen R."/>
            <person name="Sims S."/>
            <person name="Skuce C.D."/>
            <person name="Smith M."/>
            <person name="Steward C."/>
            <person name="Subramanian S."/>
            <person name="Sycamore N."/>
            <person name="Tracey A."/>
            <person name="Tromans A."/>
            <person name="Van Helmond Z."/>
            <person name="Wall M."/>
            <person name="Wallis J.M."/>
            <person name="White S."/>
            <person name="Whitehead S.L."/>
            <person name="Wilkinson J.E."/>
            <person name="Willey D.L."/>
            <person name="Williams H."/>
            <person name="Wilming L."/>
            <person name="Wray P.W."/>
            <person name="Wu Z."/>
            <person name="Coulson A."/>
            <person name="Vaudin M."/>
            <person name="Sulston J.E."/>
            <person name="Durbin R.M."/>
            <person name="Hubbard T."/>
            <person name="Wooster R."/>
            <person name="Dunham I."/>
            <person name="Carter N.P."/>
            <person name="McVean G."/>
            <person name="Ross M.T."/>
            <person name="Harrow J."/>
            <person name="Olson M.V."/>
            <person name="Beck S."/>
            <person name="Rogers J."/>
            <person name="Bentley D.R."/>
        </authorList>
    </citation>
    <scope>NUCLEOTIDE SEQUENCE [LARGE SCALE GENOMIC DNA]</scope>
</reference>
<reference key="3">
    <citation type="submission" date="2005-07" db="EMBL/GenBank/DDBJ databases">
        <authorList>
            <person name="Mural R.J."/>
            <person name="Istrail S."/>
            <person name="Sutton G.G."/>
            <person name="Florea L."/>
            <person name="Halpern A.L."/>
            <person name="Mobarry C.M."/>
            <person name="Lippert R."/>
            <person name="Walenz B."/>
            <person name="Shatkay H."/>
            <person name="Dew I."/>
            <person name="Miller J.R."/>
            <person name="Flanigan M.J."/>
            <person name="Edwards N.J."/>
            <person name="Bolanos R."/>
            <person name="Fasulo D."/>
            <person name="Halldorsson B.V."/>
            <person name="Hannenhalli S."/>
            <person name="Turner R."/>
            <person name="Yooseph S."/>
            <person name="Lu F."/>
            <person name="Nusskern D.R."/>
            <person name="Shue B.C."/>
            <person name="Zheng X.H."/>
            <person name="Zhong F."/>
            <person name="Delcher A.L."/>
            <person name="Huson D.H."/>
            <person name="Kravitz S.A."/>
            <person name="Mouchard L."/>
            <person name="Reinert K."/>
            <person name="Remington K.A."/>
            <person name="Clark A.G."/>
            <person name="Waterman M.S."/>
            <person name="Eichler E.E."/>
            <person name="Adams M.D."/>
            <person name="Hunkapiller M.W."/>
            <person name="Myers E.W."/>
            <person name="Venter J.C."/>
        </authorList>
    </citation>
    <scope>NUCLEOTIDE SEQUENCE [LARGE SCALE GENOMIC DNA]</scope>
</reference>
<reference key="4">
    <citation type="journal article" date="2004" name="Genome Res.">
        <title>The status, quality, and expansion of the NIH full-length cDNA project: the Mammalian Gene Collection (MGC).</title>
        <authorList>
            <consortium name="The MGC Project Team"/>
        </authorList>
    </citation>
    <scope>NUCLEOTIDE SEQUENCE [LARGE SCALE MRNA] (ISOFORM 1)</scope>
    <source>
        <tissue>Testis</tissue>
    </source>
</reference>
<reference key="5">
    <citation type="journal article" date="2007" name="Am. J. Hum. Genet.">
        <title>A genomewide screen for late-onset Alzheimer disease in a genetically isolated Dutch population.</title>
        <authorList>
            <person name="Liu F."/>
            <person name="Arias-Vasquez A."/>
            <person name="Sleegers K."/>
            <person name="Aulchenko Y.S."/>
            <person name="Kayser M."/>
            <person name="Sanchez-Juan P."/>
            <person name="Feng B.J."/>
            <person name="Bertoli-Avella A.M."/>
            <person name="van Swieten J."/>
            <person name="Axenovich T.I."/>
            <person name="Heutink P."/>
            <person name="van Broeckhoven C."/>
            <person name="Oostra B.A."/>
            <person name="van Duijn C.M."/>
        </authorList>
    </citation>
    <scope>POSSIBLE INVOLVEMENT IN ALZHEIMER DISEASE</scope>
</reference>
<reference key="6">
    <citation type="journal article" date="2008" name="J. Proteome Res.">
        <title>Phosphorylation analysis of primary human T lymphocytes using sequential IMAC and titanium oxide enrichment.</title>
        <authorList>
            <person name="Carrascal M."/>
            <person name="Ovelleiro D."/>
            <person name="Casas V."/>
            <person name="Gay M."/>
            <person name="Abian J."/>
        </authorList>
    </citation>
    <scope>IDENTIFICATION BY MASS SPECTROMETRY [LARGE SCALE ANALYSIS]</scope>
    <source>
        <tissue>T-cell</tissue>
    </source>
</reference>
<reference key="7">
    <citation type="journal article" date="2008" name="Proc. Natl. Acad. Sci. U.S.A.">
        <title>A quantitative atlas of mitotic phosphorylation.</title>
        <authorList>
            <person name="Dephoure N."/>
            <person name="Zhou C."/>
            <person name="Villen J."/>
            <person name="Beausoleil S.A."/>
            <person name="Bakalarski C.E."/>
            <person name="Elledge S.J."/>
            <person name="Gygi S.P."/>
        </authorList>
    </citation>
    <scope>PHOSPHORYLATION [LARGE SCALE ANALYSIS] AT SER-308; SER-311; THR-326 AND SER-329</scope>
    <scope>IDENTIFICATION BY MASS SPECTROMETRY [LARGE SCALE ANALYSIS]</scope>
    <source>
        <tissue>Cervix carcinoma</tissue>
    </source>
</reference>
<reference key="8">
    <citation type="journal article" date="2009" name="Anal. Chem.">
        <title>Lys-N and trypsin cover complementary parts of the phosphoproteome in a refined SCX-based approach.</title>
        <authorList>
            <person name="Gauci S."/>
            <person name="Helbig A.O."/>
            <person name="Slijper M."/>
            <person name="Krijgsveld J."/>
            <person name="Heck A.J."/>
            <person name="Mohammed S."/>
        </authorList>
    </citation>
    <scope>IDENTIFICATION BY MASS SPECTROMETRY [LARGE SCALE ANALYSIS]</scope>
</reference>
<reference key="9">
    <citation type="journal article" date="2011" name="Sci. Signal.">
        <title>System-wide temporal characterization of the proteome and phosphoproteome of human embryonic stem cell differentiation.</title>
        <authorList>
            <person name="Rigbolt K.T."/>
            <person name="Prokhorova T.A."/>
            <person name="Akimov V."/>
            <person name="Henningsen J."/>
            <person name="Johansen P.T."/>
            <person name="Kratchmarova I."/>
            <person name="Kassem M."/>
            <person name="Mann M."/>
            <person name="Olsen J.V."/>
            <person name="Blagoev B."/>
        </authorList>
    </citation>
    <scope>PHOSPHORYLATION [LARGE SCALE ANALYSIS] AT THR-326 AND SER-329</scope>
    <scope>IDENTIFICATION BY MASS SPECTROMETRY [LARGE SCALE ANALYSIS]</scope>
</reference>
<reference key="10">
    <citation type="journal article" date="2013" name="J. Proteome Res.">
        <title>Toward a comprehensive characterization of a human cancer cell phosphoproteome.</title>
        <authorList>
            <person name="Zhou H."/>
            <person name="Di Palma S."/>
            <person name="Preisinger C."/>
            <person name="Peng M."/>
            <person name="Polat A.N."/>
            <person name="Heck A.J."/>
            <person name="Mohammed S."/>
        </authorList>
    </citation>
    <scope>PHOSPHORYLATION [LARGE SCALE ANALYSIS] AT SER-308; SER-329; SER-343; THR-361; SER-374 AND SER-422</scope>
    <scope>IDENTIFICATION BY MASS SPECTROMETRY [LARGE SCALE ANALYSIS]</scope>
    <source>
        <tissue>Cervix carcinoma</tissue>
        <tissue>Erythroleukemia</tissue>
    </source>
</reference>
<reference key="11">
    <citation type="journal article" date="2014" name="J. Proteomics">
        <title>An enzyme assisted RP-RPLC approach for in-depth analysis of human liver phosphoproteome.</title>
        <authorList>
            <person name="Bian Y."/>
            <person name="Song C."/>
            <person name="Cheng K."/>
            <person name="Dong M."/>
            <person name="Wang F."/>
            <person name="Huang J."/>
            <person name="Sun D."/>
            <person name="Wang L."/>
            <person name="Ye M."/>
            <person name="Zou H."/>
        </authorList>
    </citation>
    <scope>PHOSPHORYLATION [LARGE SCALE ANALYSIS] AT THR-326; SER-329 AND THR-361</scope>
    <scope>IDENTIFICATION BY MASS SPECTROMETRY [LARGE SCALE ANALYSIS]</scope>
    <source>
        <tissue>Liver</tissue>
    </source>
</reference>
<sequence>MDLMNGQASSVNIAATASEKSSSSESLSDKGSELKKSFDAVVFDVLKVTPEEYAGQITLMDVPVFKAIQPDELSSCGWNKKEKYSSAPNAVAFTRRFNHVSFWVVREILHAQTLKIRAEVLSHYIKTAKKLYELNNLHALMAVVSGLQSAPIFRLTKTWALLSRKDKTTFEKLEYVMSKEDNYKRLRDYISSLKMTPCIPYLGIYLSDLTYIDSAYPSTGSILENEQRSNLMNNILRIISDLQQSCEYDIPMLPHVQKYLNSVQYIEELQKFVEDDNYKLSLKIEPGTSTPRSAASREDLVGPEVGASPQSGRKSVAAEGALLPQTPPSPRNLIPHGHRKCHSLGYNFIHKMNTAEFKSATFPNAGPRHLLDDSVMEPHAPSRGQAESSTLSSGISIGSSDGSELSEETSWPAFERNRLYHSLGPVTRVARNGYRSHMKASSSAESEDLAVHLYPGAVTIQGVLRRKTLLKEGKKPTVASWTKYWAALCGTQLFYYAAKSLKATERKHFKSTSNKNVSVIGWMVMMADDPEHPDLFLLTDSEKGNSYKFQAGNRMNAMLWFKHLSAACQSNKQQVPTNLMTFE</sequence>
<accession>Q86X27</accession>
<accession>B7Z7B1</accession>
<accession>Q5T5Z1</accession>
<accession>Q5VZ67</accession>
<accession>Q9NW78</accession>
<keyword id="KW-0025">Alternative splicing</keyword>
<keyword id="KW-0026">Alzheimer disease</keyword>
<keyword id="KW-1003">Cell membrane</keyword>
<keyword id="KW-0963">Cytoplasm</keyword>
<keyword id="KW-0344">Guanine-nucleotide releasing factor</keyword>
<keyword id="KW-0472">Membrane</keyword>
<keyword id="KW-0597">Phosphoprotein</keyword>
<keyword id="KW-1267">Proteomics identification</keyword>
<keyword id="KW-1185">Reference proteome</keyword>
<gene>
    <name type="primary">RALGPS2</name>
</gene>
<name>RGPS2_HUMAN</name>
<protein>
    <recommendedName>
        <fullName>Ras-specific guanine nucleotide-releasing factor RalGPS2</fullName>
    </recommendedName>
    <alternativeName>
        <fullName>Ral GEF with PH domain and SH3-binding motif 2</fullName>
    </alternativeName>
    <alternativeName>
        <fullName>RalA exchange factor RalGPS2</fullName>
    </alternativeName>
</protein>
<feature type="chain" id="PRO_0000322600" description="Ras-specific guanine nucleotide-releasing factor RalGPS2">
    <location>
        <begin position="1"/>
        <end position="583"/>
    </location>
</feature>
<feature type="domain" description="Ras-GEF" evidence="4">
    <location>
        <begin position="49"/>
        <end position="287"/>
    </location>
</feature>
<feature type="domain" description="PH" evidence="3">
    <location>
        <begin position="457"/>
        <end position="569"/>
    </location>
</feature>
<feature type="region of interest" description="Disordered" evidence="5">
    <location>
        <begin position="283"/>
        <end position="314"/>
    </location>
</feature>
<feature type="region of interest" description="Disordered" evidence="5">
    <location>
        <begin position="372"/>
        <end position="406"/>
    </location>
</feature>
<feature type="region of interest" description="Required for stimulation of nucleotide exchange by RALA" evidence="1">
    <location>
        <begin position="459"/>
        <end position="583"/>
    </location>
</feature>
<feature type="short sequence motif" description="PXXP">
    <location>
        <begin position="324"/>
        <end position="327"/>
    </location>
</feature>
<feature type="compositionally biased region" description="Low complexity" evidence="5">
    <location>
        <begin position="387"/>
        <end position="403"/>
    </location>
</feature>
<feature type="modified residue" description="Phosphoserine" evidence="2">
    <location>
        <position position="293"/>
    </location>
</feature>
<feature type="modified residue" description="Phosphoserine" evidence="2">
    <location>
        <position position="296"/>
    </location>
</feature>
<feature type="modified residue" description="Phosphoserine" evidence="9 11">
    <location>
        <position position="308"/>
    </location>
</feature>
<feature type="modified residue" description="Phosphoserine" evidence="9">
    <location>
        <position position="311"/>
    </location>
</feature>
<feature type="modified residue" description="Phosphothreonine" evidence="9 10 12">
    <location>
        <position position="326"/>
    </location>
</feature>
<feature type="modified residue" description="Phosphoserine" evidence="9 10 11 12">
    <location>
        <position position="329"/>
    </location>
</feature>
<feature type="modified residue" description="Phosphoserine" evidence="11">
    <location>
        <position position="343"/>
    </location>
</feature>
<feature type="modified residue" description="Phosphothreonine" evidence="11 12">
    <location>
        <position position="361"/>
    </location>
</feature>
<feature type="modified residue" description="Phosphoserine" evidence="11">
    <location>
        <position position="374"/>
    </location>
</feature>
<feature type="modified residue" description="Phosphoserine" evidence="11">
    <location>
        <position position="422"/>
    </location>
</feature>
<feature type="splice variant" id="VSP_031971" description="In isoform 2." evidence="7">
    <location>
        <begin position="280"/>
        <end position="583"/>
    </location>
</feature>
<feature type="splice variant" id="VSP_054909" description="In isoform 3." evidence="7">
    <location>
        <begin position="416"/>
        <end position="441"/>
    </location>
</feature>
<feature type="sequence variant" id="VAR_039468" description="In dbSNP:rs35161510.">
    <original>N</original>
    <variation>S</variation>
    <location>
        <position position="225"/>
    </location>
</feature>
<feature type="sequence conflict" description="In Ref. 1; BAH13547." evidence="8" ref="1">
    <original>I</original>
    <variation>V</variation>
    <location>
        <position position="395"/>
    </location>
</feature>
<dbReference type="EMBL" id="AK001106">
    <property type="protein sequence ID" value="BAA91506.1"/>
    <property type="molecule type" value="mRNA"/>
</dbReference>
<dbReference type="EMBL" id="AK301753">
    <property type="protein sequence ID" value="BAH13547.1"/>
    <property type="molecule type" value="mRNA"/>
</dbReference>
<dbReference type="EMBL" id="AL162255">
    <property type="status" value="NOT_ANNOTATED_CDS"/>
    <property type="molecule type" value="Genomic_DNA"/>
</dbReference>
<dbReference type="EMBL" id="AL355520">
    <property type="status" value="NOT_ANNOTATED_CDS"/>
    <property type="molecule type" value="Genomic_DNA"/>
</dbReference>
<dbReference type="EMBL" id="CH471067">
    <property type="protein sequence ID" value="EAW91028.1"/>
    <property type="molecule type" value="Genomic_DNA"/>
</dbReference>
<dbReference type="EMBL" id="CH471067">
    <property type="protein sequence ID" value="EAW91029.1"/>
    <property type="molecule type" value="Genomic_DNA"/>
</dbReference>
<dbReference type="EMBL" id="BC047391">
    <property type="protein sequence ID" value="AAH47391.1"/>
    <property type="molecule type" value="mRNA"/>
</dbReference>
<dbReference type="CCDS" id="CCDS1325.1">
    <molecule id="Q86X27-1"/>
</dbReference>
<dbReference type="CCDS" id="CCDS65733.1">
    <molecule id="Q86X27-3"/>
</dbReference>
<dbReference type="RefSeq" id="NP_001273176.1">
    <molecule id="Q86X27-3"/>
    <property type="nucleotide sequence ID" value="NM_001286247.2"/>
</dbReference>
<dbReference type="RefSeq" id="NP_689876.2">
    <molecule id="Q86X27-1"/>
    <property type="nucleotide sequence ID" value="NM_152663.4"/>
</dbReference>
<dbReference type="RefSeq" id="XP_006711473.1">
    <molecule id="Q86X27-1"/>
    <property type="nucleotide sequence ID" value="XM_006711410.4"/>
</dbReference>
<dbReference type="RefSeq" id="XP_047279711.1">
    <molecule id="Q86X27-1"/>
    <property type="nucleotide sequence ID" value="XM_047423755.1"/>
</dbReference>
<dbReference type="RefSeq" id="XP_054193289.1">
    <molecule id="Q86X27-1"/>
    <property type="nucleotide sequence ID" value="XM_054337314.1"/>
</dbReference>
<dbReference type="SMR" id="Q86X27"/>
<dbReference type="BioGRID" id="120413">
    <property type="interactions" value="50"/>
</dbReference>
<dbReference type="FunCoup" id="Q86X27">
    <property type="interactions" value="1293"/>
</dbReference>
<dbReference type="IntAct" id="Q86X27">
    <property type="interactions" value="12"/>
</dbReference>
<dbReference type="MINT" id="Q86X27"/>
<dbReference type="STRING" id="9606.ENSP00000356607"/>
<dbReference type="GlyCosmos" id="Q86X27">
    <property type="glycosylation" value="1 site, 1 glycan"/>
</dbReference>
<dbReference type="GlyGen" id="Q86X27">
    <property type="glycosylation" value="1 site, 1 O-linked glycan (1 site)"/>
</dbReference>
<dbReference type="iPTMnet" id="Q86X27"/>
<dbReference type="PhosphoSitePlus" id="Q86X27"/>
<dbReference type="BioMuta" id="RALGPS2"/>
<dbReference type="DMDM" id="74750518"/>
<dbReference type="jPOST" id="Q86X27"/>
<dbReference type="MassIVE" id="Q86X27"/>
<dbReference type="PaxDb" id="9606-ENSP00000356607"/>
<dbReference type="PeptideAtlas" id="Q86X27"/>
<dbReference type="ProteomicsDB" id="70228">
    <molecule id="Q86X27-1"/>
</dbReference>
<dbReference type="ProteomicsDB" id="70229">
    <molecule id="Q86X27-2"/>
</dbReference>
<dbReference type="Pumba" id="Q86X27"/>
<dbReference type="Antibodypedia" id="34414">
    <property type="antibodies" value="97 antibodies from 16 providers"/>
</dbReference>
<dbReference type="DNASU" id="55103"/>
<dbReference type="Ensembl" id="ENST00000367634.7">
    <molecule id="Q86X27-3"/>
    <property type="protein sequence ID" value="ENSP00000356606.2"/>
    <property type="gene ID" value="ENSG00000116191.19"/>
</dbReference>
<dbReference type="Ensembl" id="ENST00000367635.8">
    <molecule id="Q86X27-1"/>
    <property type="protein sequence ID" value="ENSP00000356607.3"/>
    <property type="gene ID" value="ENSG00000116191.19"/>
</dbReference>
<dbReference type="GeneID" id="55103"/>
<dbReference type="KEGG" id="hsa:55103"/>
<dbReference type="MANE-Select" id="ENST00000367635.8">
    <property type="protein sequence ID" value="ENSP00000356607.3"/>
    <property type="RefSeq nucleotide sequence ID" value="NM_152663.5"/>
    <property type="RefSeq protein sequence ID" value="NP_689876.2"/>
</dbReference>
<dbReference type="UCSC" id="uc001glz.5">
    <molecule id="Q86X27-1"/>
    <property type="organism name" value="human"/>
</dbReference>
<dbReference type="AGR" id="HGNC:30279"/>
<dbReference type="CTD" id="55103"/>
<dbReference type="DisGeNET" id="55103"/>
<dbReference type="GeneCards" id="RALGPS2"/>
<dbReference type="HGNC" id="HGNC:30279">
    <property type="gene designation" value="RALGPS2"/>
</dbReference>
<dbReference type="HPA" id="ENSG00000116191">
    <property type="expression patterns" value="Tissue enhanced (lymphoid tissue, retina, testis)"/>
</dbReference>
<dbReference type="MIM" id="617819">
    <property type="type" value="gene"/>
</dbReference>
<dbReference type="neXtProt" id="NX_Q86X27"/>
<dbReference type="OpenTargets" id="ENSG00000116191"/>
<dbReference type="PharmGKB" id="PA134864387"/>
<dbReference type="VEuPathDB" id="HostDB:ENSG00000116191"/>
<dbReference type="eggNOG" id="KOG3417">
    <property type="taxonomic scope" value="Eukaryota"/>
</dbReference>
<dbReference type="GeneTree" id="ENSGT00940000154079"/>
<dbReference type="HOGENOM" id="CLU_021333_0_1_1"/>
<dbReference type="InParanoid" id="Q86X27"/>
<dbReference type="OMA" id="XSAESED"/>
<dbReference type="OrthoDB" id="546434at2759"/>
<dbReference type="PAN-GO" id="Q86X27">
    <property type="GO annotations" value="4 GO annotations based on evolutionary models"/>
</dbReference>
<dbReference type="PhylomeDB" id="Q86X27"/>
<dbReference type="TreeFam" id="TF352150"/>
<dbReference type="PathwayCommons" id="Q86X27"/>
<dbReference type="SignaLink" id="Q86X27"/>
<dbReference type="BioGRID-ORCS" id="55103">
    <property type="hits" value="12 hits in 1167 CRISPR screens"/>
</dbReference>
<dbReference type="ChiTaRS" id="RALGPS2">
    <property type="organism name" value="human"/>
</dbReference>
<dbReference type="GenomeRNAi" id="55103"/>
<dbReference type="Pharos" id="Q86X27">
    <property type="development level" value="Tdark"/>
</dbReference>
<dbReference type="PRO" id="PR:Q86X27"/>
<dbReference type="Proteomes" id="UP000005640">
    <property type="component" value="Chromosome 1"/>
</dbReference>
<dbReference type="RNAct" id="Q86X27">
    <property type="molecule type" value="protein"/>
</dbReference>
<dbReference type="Bgee" id="ENSG00000116191">
    <property type="expression patterns" value="Expressed in gingival epithelium and 170 other cell types or tissues"/>
</dbReference>
<dbReference type="ExpressionAtlas" id="Q86X27">
    <property type="expression patterns" value="baseline and differential"/>
</dbReference>
<dbReference type="GO" id="GO:0005737">
    <property type="term" value="C:cytoplasm"/>
    <property type="evidence" value="ECO:0007669"/>
    <property type="project" value="UniProtKB-SubCell"/>
</dbReference>
<dbReference type="GO" id="GO:0005886">
    <property type="term" value="C:plasma membrane"/>
    <property type="evidence" value="ECO:0000318"/>
    <property type="project" value="GO_Central"/>
</dbReference>
<dbReference type="GO" id="GO:0005085">
    <property type="term" value="F:guanyl-nucleotide exchange factor activity"/>
    <property type="evidence" value="ECO:0000318"/>
    <property type="project" value="GO_Central"/>
</dbReference>
<dbReference type="GO" id="GO:0007265">
    <property type="term" value="P:Ras protein signal transduction"/>
    <property type="evidence" value="ECO:0000318"/>
    <property type="project" value="GO_Central"/>
</dbReference>
<dbReference type="CDD" id="cd13310">
    <property type="entry name" value="PH_RalGPS1_2"/>
    <property type="match status" value="1"/>
</dbReference>
<dbReference type="CDD" id="cd00155">
    <property type="entry name" value="RasGEF"/>
    <property type="match status" value="1"/>
</dbReference>
<dbReference type="FunFam" id="1.10.840.10:FF:000010">
    <property type="entry name" value="ras-specific guanine nucleotide-releasing factor RalGPS1 isoform X1"/>
    <property type="match status" value="1"/>
</dbReference>
<dbReference type="Gene3D" id="2.30.29.30">
    <property type="entry name" value="Pleckstrin-homology domain (PH domain)/Phosphotyrosine-binding domain (PTB)"/>
    <property type="match status" value="1"/>
</dbReference>
<dbReference type="Gene3D" id="1.10.840.10">
    <property type="entry name" value="Ras guanine-nucleotide exchange factors catalytic domain"/>
    <property type="match status" value="1"/>
</dbReference>
<dbReference type="InterPro" id="IPR011993">
    <property type="entry name" value="PH-like_dom_sf"/>
</dbReference>
<dbReference type="InterPro" id="IPR001849">
    <property type="entry name" value="PH_domain"/>
</dbReference>
<dbReference type="InterPro" id="IPR008937">
    <property type="entry name" value="Ras-like_GEF"/>
</dbReference>
<dbReference type="InterPro" id="IPR023578">
    <property type="entry name" value="Ras_GEF_dom_sf"/>
</dbReference>
<dbReference type="InterPro" id="IPR001895">
    <property type="entry name" value="RASGEF_cat_dom"/>
</dbReference>
<dbReference type="InterPro" id="IPR036964">
    <property type="entry name" value="RASGEF_cat_dom_sf"/>
</dbReference>
<dbReference type="PANTHER" id="PTHR23113">
    <property type="entry name" value="GUANINE NUCLEOTIDE EXCHANGE FACTOR"/>
    <property type="match status" value="1"/>
</dbReference>
<dbReference type="PANTHER" id="PTHR23113:SF357">
    <property type="entry name" value="RAS-SPECIFIC GUANINE NUCLEOTIDE-RELEASING FACTOR RALGPS2"/>
    <property type="match status" value="1"/>
</dbReference>
<dbReference type="Pfam" id="PF00169">
    <property type="entry name" value="PH"/>
    <property type="match status" value="1"/>
</dbReference>
<dbReference type="Pfam" id="PF00617">
    <property type="entry name" value="RasGEF"/>
    <property type="match status" value="1"/>
</dbReference>
<dbReference type="SMART" id="SM00233">
    <property type="entry name" value="PH"/>
    <property type="match status" value="1"/>
</dbReference>
<dbReference type="SMART" id="SM00147">
    <property type="entry name" value="RasGEF"/>
    <property type="match status" value="1"/>
</dbReference>
<dbReference type="SUPFAM" id="SSF50729">
    <property type="entry name" value="PH domain-like"/>
    <property type="match status" value="1"/>
</dbReference>
<dbReference type="SUPFAM" id="SSF48366">
    <property type="entry name" value="Ras GEF"/>
    <property type="match status" value="1"/>
</dbReference>
<dbReference type="PROSITE" id="PS50003">
    <property type="entry name" value="PH_DOMAIN"/>
    <property type="match status" value="1"/>
</dbReference>
<dbReference type="PROSITE" id="PS50009">
    <property type="entry name" value="RASGEF_CAT"/>
    <property type="match status" value="1"/>
</dbReference>
<organism>
    <name type="scientific">Homo sapiens</name>
    <name type="common">Human</name>
    <dbReference type="NCBI Taxonomy" id="9606"/>
    <lineage>
        <taxon>Eukaryota</taxon>
        <taxon>Metazoa</taxon>
        <taxon>Chordata</taxon>
        <taxon>Craniata</taxon>
        <taxon>Vertebrata</taxon>
        <taxon>Euteleostomi</taxon>
        <taxon>Mammalia</taxon>
        <taxon>Eutheria</taxon>
        <taxon>Euarchontoglires</taxon>
        <taxon>Primates</taxon>
        <taxon>Haplorrhini</taxon>
        <taxon>Catarrhini</taxon>
        <taxon>Hominidae</taxon>
        <taxon>Homo</taxon>
    </lineage>
</organism>
<evidence type="ECO:0000250" key="1"/>
<evidence type="ECO:0000250" key="2">
    <source>
        <dbReference type="UniProtKB" id="Q9ERD6"/>
    </source>
</evidence>
<evidence type="ECO:0000255" key="3">
    <source>
        <dbReference type="PROSITE-ProRule" id="PRU00145"/>
    </source>
</evidence>
<evidence type="ECO:0000255" key="4">
    <source>
        <dbReference type="PROSITE-ProRule" id="PRU00168"/>
    </source>
</evidence>
<evidence type="ECO:0000256" key="5">
    <source>
        <dbReference type="SAM" id="MobiDB-lite"/>
    </source>
</evidence>
<evidence type="ECO:0000269" key="6">
    <source>
    </source>
</evidence>
<evidence type="ECO:0000303" key="7">
    <source>
    </source>
</evidence>
<evidence type="ECO:0000305" key="8"/>
<evidence type="ECO:0007744" key="9">
    <source>
    </source>
</evidence>
<evidence type="ECO:0007744" key="10">
    <source>
    </source>
</evidence>
<evidence type="ECO:0007744" key="11">
    <source>
    </source>
</evidence>
<evidence type="ECO:0007744" key="12">
    <source>
    </source>
</evidence>